<gene>
    <name evidence="1" type="primary">kdpA</name>
    <name type="ordered locus">STM0706</name>
</gene>
<protein>
    <recommendedName>
        <fullName evidence="1">Potassium-transporting ATPase potassium-binding subunit</fullName>
    </recommendedName>
    <alternativeName>
        <fullName evidence="1">ATP phosphohydrolase [potassium-transporting] A chain</fullName>
    </alternativeName>
    <alternativeName>
        <fullName evidence="1">Potassium-binding and translocating subunit A</fullName>
    </alternativeName>
    <alternativeName>
        <fullName evidence="1">Potassium-translocating ATPase A chain</fullName>
    </alternativeName>
</protein>
<dbReference type="EMBL" id="AE006468">
    <property type="protein sequence ID" value="AAL19650.1"/>
    <property type="molecule type" value="Genomic_DNA"/>
</dbReference>
<dbReference type="RefSeq" id="NP_459691.1">
    <property type="nucleotide sequence ID" value="NC_003197.2"/>
</dbReference>
<dbReference type="RefSeq" id="WP_000730065.1">
    <property type="nucleotide sequence ID" value="NC_003197.2"/>
</dbReference>
<dbReference type="SMR" id="Q8ZQW1"/>
<dbReference type="STRING" id="99287.STM0706"/>
<dbReference type="PaxDb" id="99287-STM0706"/>
<dbReference type="GeneID" id="1252226"/>
<dbReference type="KEGG" id="stm:STM0706"/>
<dbReference type="PATRIC" id="fig|99287.12.peg.739"/>
<dbReference type="HOGENOM" id="CLU_018614_3_0_6"/>
<dbReference type="PhylomeDB" id="Q8ZQW1"/>
<dbReference type="BioCyc" id="SENT99287:STM0706-MONOMER"/>
<dbReference type="Proteomes" id="UP000001014">
    <property type="component" value="Chromosome"/>
</dbReference>
<dbReference type="GO" id="GO:0005886">
    <property type="term" value="C:plasma membrane"/>
    <property type="evidence" value="ECO:0000318"/>
    <property type="project" value="GO_Central"/>
</dbReference>
<dbReference type="GO" id="GO:0008556">
    <property type="term" value="F:P-type potassium transmembrane transporter activity"/>
    <property type="evidence" value="ECO:0000318"/>
    <property type="project" value="GO_Central"/>
</dbReference>
<dbReference type="GO" id="GO:0030955">
    <property type="term" value="F:potassium ion binding"/>
    <property type="evidence" value="ECO:0007669"/>
    <property type="project" value="UniProtKB-UniRule"/>
</dbReference>
<dbReference type="GO" id="GO:0071805">
    <property type="term" value="P:potassium ion transmembrane transport"/>
    <property type="evidence" value="ECO:0000318"/>
    <property type="project" value="GO_Central"/>
</dbReference>
<dbReference type="HAMAP" id="MF_00275">
    <property type="entry name" value="KdpA"/>
    <property type="match status" value="1"/>
</dbReference>
<dbReference type="InterPro" id="IPR004623">
    <property type="entry name" value="KdpA"/>
</dbReference>
<dbReference type="NCBIfam" id="TIGR00680">
    <property type="entry name" value="kdpA"/>
    <property type="match status" value="1"/>
</dbReference>
<dbReference type="PANTHER" id="PTHR30607">
    <property type="entry name" value="POTASSIUM-TRANSPORTING ATPASE A CHAIN"/>
    <property type="match status" value="1"/>
</dbReference>
<dbReference type="PANTHER" id="PTHR30607:SF2">
    <property type="entry name" value="POTASSIUM-TRANSPORTING ATPASE POTASSIUM-BINDING SUBUNIT"/>
    <property type="match status" value="1"/>
</dbReference>
<dbReference type="Pfam" id="PF03814">
    <property type="entry name" value="KdpA"/>
    <property type="match status" value="1"/>
</dbReference>
<dbReference type="PIRSF" id="PIRSF001294">
    <property type="entry name" value="K_ATPaseA"/>
    <property type="match status" value="1"/>
</dbReference>
<feature type="chain" id="PRO_0000166522" description="Potassium-transporting ATPase potassium-binding subunit">
    <location>
        <begin position="1"/>
        <end position="559"/>
    </location>
</feature>
<feature type="transmembrane region" description="Helical" evidence="1">
    <location>
        <begin position="5"/>
        <end position="25"/>
    </location>
</feature>
<feature type="transmembrane region" description="Helical" evidence="1">
    <location>
        <begin position="27"/>
        <end position="47"/>
    </location>
</feature>
<feature type="transmembrane region" description="Helical" evidence="1">
    <location>
        <begin position="63"/>
        <end position="83"/>
    </location>
</feature>
<feature type="transmembrane region" description="Helical" evidence="1">
    <location>
        <begin position="132"/>
        <end position="152"/>
    </location>
</feature>
<feature type="transmembrane region" description="Helical" evidence="1">
    <location>
        <begin position="170"/>
        <end position="190"/>
    </location>
</feature>
<feature type="transmembrane region" description="Helical" evidence="1">
    <location>
        <begin position="253"/>
        <end position="273"/>
    </location>
</feature>
<feature type="transmembrane region" description="Helical" evidence="1">
    <location>
        <begin position="283"/>
        <end position="303"/>
    </location>
</feature>
<feature type="transmembrane region" description="Helical" evidence="1">
    <location>
        <begin position="327"/>
        <end position="347"/>
    </location>
</feature>
<feature type="transmembrane region" description="Helical" evidence="1">
    <location>
        <begin position="356"/>
        <end position="376"/>
    </location>
</feature>
<feature type="transmembrane region" description="Helical" evidence="1">
    <location>
        <begin position="379"/>
        <end position="399"/>
    </location>
</feature>
<feature type="transmembrane region" description="Helical" evidence="1">
    <location>
        <begin position="416"/>
        <end position="436"/>
    </location>
</feature>
<feature type="transmembrane region" description="Helical" evidence="1">
    <location>
        <begin position="484"/>
        <end position="504"/>
    </location>
</feature>
<feature type="transmembrane region" description="Helical" evidence="1">
    <location>
        <begin position="524"/>
        <end position="544"/>
    </location>
</feature>
<reference key="1">
    <citation type="journal article" date="2001" name="Nature">
        <title>Complete genome sequence of Salmonella enterica serovar Typhimurium LT2.</title>
        <authorList>
            <person name="McClelland M."/>
            <person name="Sanderson K.E."/>
            <person name="Spieth J."/>
            <person name="Clifton S.W."/>
            <person name="Latreille P."/>
            <person name="Courtney L."/>
            <person name="Porwollik S."/>
            <person name="Ali J."/>
            <person name="Dante M."/>
            <person name="Du F."/>
            <person name="Hou S."/>
            <person name="Layman D."/>
            <person name="Leonard S."/>
            <person name="Nguyen C."/>
            <person name="Scott K."/>
            <person name="Holmes A."/>
            <person name="Grewal N."/>
            <person name="Mulvaney E."/>
            <person name="Ryan E."/>
            <person name="Sun H."/>
            <person name="Florea L."/>
            <person name="Miller W."/>
            <person name="Stoneking T."/>
            <person name="Nhan M."/>
            <person name="Waterston R."/>
            <person name="Wilson R.K."/>
        </authorList>
    </citation>
    <scope>NUCLEOTIDE SEQUENCE [LARGE SCALE GENOMIC DNA]</scope>
    <source>
        <strain>LT2 / SGSC1412 / ATCC 700720</strain>
    </source>
</reference>
<organism>
    <name type="scientific">Salmonella typhimurium (strain LT2 / SGSC1412 / ATCC 700720)</name>
    <dbReference type="NCBI Taxonomy" id="99287"/>
    <lineage>
        <taxon>Bacteria</taxon>
        <taxon>Pseudomonadati</taxon>
        <taxon>Pseudomonadota</taxon>
        <taxon>Gammaproteobacteria</taxon>
        <taxon>Enterobacterales</taxon>
        <taxon>Enterobacteriaceae</taxon>
        <taxon>Salmonella</taxon>
    </lineage>
</organism>
<proteinExistence type="inferred from homology"/>
<name>KDPA_SALTY</name>
<sequence>MAAQGFLLIASFLLILLVLAKPLGSGLARLIAAVPLPGVAGIERILWRTLGITDHEMNWRQYLLALLTLNLLGLGILFCLLFWQEWLPLNPQRLPGLSGDLALNTAVSFVTNTNWQAYSGESTLSYFSQMAGLTVQNFLSAATGIAVVFALIRAFTRQNVHTLGNAWQDLVRITLWILFPVALIIALFFIQQGVPQNLSAYQPITTLEGAKQLLPMGPVASQEAIKMLGTNGGGFFNANSSHPFENPTALTNLAQMLAIFLIPAALCFAFGEAAGDRCQGRALLWAMSFIFVVCVAVVMWAEVQGNPHLLAAGADSSVNMEGKETRFGVLASSLFAVVTTAASCGAVNAMHDSFTALGGMVPMWLMQIGEVVFGGVGSGLYGMLLFVLLAVFIAGLMIGRTPEYLGKKIDVREMKMTALAILVTPMLVLLGSALAMMTDAGRSAMLNPGPHGFSEVLYAVSSAANNNGSAFAGLSANSPFWNCLLAFCMFVGRFGVIIPVMAIAGSLVSKKVQPASQGTLATHGALFIGLLIGTVLLVGALTFIPALALGPVAEHFSLP</sequence>
<accession>Q8ZQW1</accession>
<evidence type="ECO:0000255" key="1">
    <source>
        <dbReference type="HAMAP-Rule" id="MF_00275"/>
    </source>
</evidence>
<keyword id="KW-0997">Cell inner membrane</keyword>
<keyword id="KW-1003">Cell membrane</keyword>
<keyword id="KW-0406">Ion transport</keyword>
<keyword id="KW-0472">Membrane</keyword>
<keyword id="KW-0630">Potassium</keyword>
<keyword id="KW-0633">Potassium transport</keyword>
<keyword id="KW-1185">Reference proteome</keyword>
<keyword id="KW-0812">Transmembrane</keyword>
<keyword id="KW-1133">Transmembrane helix</keyword>
<keyword id="KW-0813">Transport</keyword>
<comment type="function">
    <text evidence="1">Part of the high-affinity ATP-driven potassium transport (or Kdp) system, which catalyzes the hydrolysis of ATP coupled with the electrogenic transport of potassium into the cytoplasm. This subunit binds the periplasmic potassium ions and delivers the ions to the membrane domain of KdpB through an intramembrane tunnel.</text>
</comment>
<comment type="subunit">
    <text evidence="1">The system is composed of three essential subunits: KdpA, KdpB and KdpC.</text>
</comment>
<comment type="subcellular location">
    <subcellularLocation>
        <location evidence="1">Cell inner membrane</location>
        <topology evidence="1">Multi-pass membrane protein</topology>
    </subcellularLocation>
</comment>
<comment type="similarity">
    <text evidence="1">Belongs to the KdpA family.</text>
</comment>